<name>OPGH_SALTI</name>
<comment type="function">
    <text evidence="2">Involved in the biosynthesis of osmoregulated periplasmic glucans (OPGs).</text>
</comment>
<comment type="pathway">
    <text evidence="2">Glycan metabolism; osmoregulated periplasmic glucan (OPG) biosynthesis.</text>
</comment>
<comment type="subcellular location">
    <subcellularLocation>
        <location evidence="2">Cell inner membrane</location>
        <topology evidence="2">Multi-pass membrane protein</topology>
    </subcellularLocation>
</comment>
<comment type="similarity">
    <text evidence="2">Belongs to the glycosyltransferase 2 family. OpgH subfamily.</text>
</comment>
<protein>
    <recommendedName>
        <fullName evidence="2">Glucans biosynthesis glucosyltransferase H</fullName>
        <ecNumber evidence="2">2.4.1.-</ecNumber>
    </recommendedName>
</protein>
<organism>
    <name type="scientific">Salmonella typhi</name>
    <dbReference type="NCBI Taxonomy" id="90370"/>
    <lineage>
        <taxon>Bacteria</taxon>
        <taxon>Pseudomonadati</taxon>
        <taxon>Pseudomonadota</taxon>
        <taxon>Gammaproteobacteria</taxon>
        <taxon>Enterobacterales</taxon>
        <taxon>Enterobacteriaceae</taxon>
        <taxon>Salmonella</taxon>
    </lineage>
</organism>
<evidence type="ECO:0000255" key="1"/>
<evidence type="ECO:0000255" key="2">
    <source>
        <dbReference type="HAMAP-Rule" id="MF_01072"/>
    </source>
</evidence>
<gene>
    <name evidence="2" type="primary">mdoH</name>
    <name evidence="2" type="synonym">opgH</name>
    <name type="ordered locus">STY1188</name>
    <name type="ordered locus">t1769</name>
</gene>
<dbReference type="EC" id="2.4.1.-" evidence="2"/>
<dbReference type="EMBL" id="AL513382">
    <property type="protein sequence ID" value="CAD08275.1"/>
    <property type="molecule type" value="Genomic_DNA"/>
</dbReference>
<dbReference type="EMBL" id="AE014613">
    <property type="protein sequence ID" value="AAO69392.1"/>
    <property type="molecule type" value="Genomic_DNA"/>
</dbReference>
<dbReference type="RefSeq" id="NP_455645.1">
    <property type="nucleotide sequence ID" value="NC_003198.1"/>
</dbReference>
<dbReference type="RefSeq" id="WP_001044602.1">
    <property type="nucleotide sequence ID" value="NZ_WSUR01000018.1"/>
</dbReference>
<dbReference type="STRING" id="220341.gene:17585155"/>
<dbReference type="KEGG" id="stt:t1769"/>
<dbReference type="KEGG" id="sty:STY1188"/>
<dbReference type="PATRIC" id="fig|220341.7.peg.1189"/>
<dbReference type="eggNOG" id="COG2943">
    <property type="taxonomic scope" value="Bacteria"/>
</dbReference>
<dbReference type="HOGENOM" id="CLU_015730_0_0_6"/>
<dbReference type="OMA" id="HYWQLGE"/>
<dbReference type="OrthoDB" id="9775281at2"/>
<dbReference type="UniPathway" id="UPA00637"/>
<dbReference type="Proteomes" id="UP000000541">
    <property type="component" value="Chromosome"/>
</dbReference>
<dbReference type="Proteomes" id="UP000002670">
    <property type="component" value="Chromosome"/>
</dbReference>
<dbReference type="GO" id="GO:0005886">
    <property type="term" value="C:plasma membrane"/>
    <property type="evidence" value="ECO:0007669"/>
    <property type="project" value="UniProtKB-SubCell"/>
</dbReference>
<dbReference type="GO" id="GO:0016758">
    <property type="term" value="F:hexosyltransferase activity"/>
    <property type="evidence" value="ECO:0007669"/>
    <property type="project" value="UniProtKB-UniRule"/>
</dbReference>
<dbReference type="GO" id="GO:0009250">
    <property type="term" value="P:glucan biosynthetic process"/>
    <property type="evidence" value="ECO:0007669"/>
    <property type="project" value="UniProtKB-UniRule"/>
</dbReference>
<dbReference type="CDD" id="cd04191">
    <property type="entry name" value="Glucan_BSP_MdoH"/>
    <property type="match status" value="1"/>
</dbReference>
<dbReference type="FunFam" id="3.90.550.10:FF:000047">
    <property type="entry name" value="Glucans biosynthesis glucosyltransferase H"/>
    <property type="match status" value="1"/>
</dbReference>
<dbReference type="Gene3D" id="3.90.550.10">
    <property type="entry name" value="Spore Coat Polysaccharide Biosynthesis Protein SpsA, Chain A"/>
    <property type="match status" value="1"/>
</dbReference>
<dbReference type="HAMAP" id="MF_01072">
    <property type="entry name" value="MdoH_OpgH"/>
    <property type="match status" value="1"/>
</dbReference>
<dbReference type="InterPro" id="IPR023725">
    <property type="entry name" value="Glucans_biosynth_gluTrFase_H"/>
</dbReference>
<dbReference type="InterPro" id="IPR001173">
    <property type="entry name" value="Glyco_trans_2-like"/>
</dbReference>
<dbReference type="InterPro" id="IPR050321">
    <property type="entry name" value="Glycosyltr_2/OpgH_subfam"/>
</dbReference>
<dbReference type="InterPro" id="IPR029044">
    <property type="entry name" value="Nucleotide-diphossugar_trans"/>
</dbReference>
<dbReference type="NCBIfam" id="NF003955">
    <property type="entry name" value="PRK05454.1-1"/>
    <property type="match status" value="1"/>
</dbReference>
<dbReference type="NCBIfam" id="NF003958">
    <property type="entry name" value="PRK05454.2-1"/>
    <property type="match status" value="1"/>
</dbReference>
<dbReference type="NCBIfam" id="NF003962">
    <property type="entry name" value="PRK05454.2-5"/>
    <property type="match status" value="1"/>
</dbReference>
<dbReference type="PANTHER" id="PTHR43867">
    <property type="entry name" value="CELLULOSE SYNTHASE CATALYTIC SUBUNIT A [UDP-FORMING]"/>
    <property type="match status" value="1"/>
</dbReference>
<dbReference type="PANTHER" id="PTHR43867:SF5">
    <property type="entry name" value="GLUCANS BIOSYNTHESIS GLUCOSYLTRANSFERASE H"/>
    <property type="match status" value="1"/>
</dbReference>
<dbReference type="Pfam" id="PF00535">
    <property type="entry name" value="Glycos_transf_2"/>
    <property type="match status" value="1"/>
</dbReference>
<dbReference type="SUPFAM" id="SSF53448">
    <property type="entry name" value="Nucleotide-diphospho-sugar transferases"/>
    <property type="match status" value="1"/>
</dbReference>
<reference key="1">
    <citation type="journal article" date="2001" name="Nature">
        <title>Complete genome sequence of a multiple drug resistant Salmonella enterica serovar Typhi CT18.</title>
        <authorList>
            <person name="Parkhill J."/>
            <person name="Dougan G."/>
            <person name="James K.D."/>
            <person name="Thomson N.R."/>
            <person name="Pickard D."/>
            <person name="Wain J."/>
            <person name="Churcher C.M."/>
            <person name="Mungall K.L."/>
            <person name="Bentley S.D."/>
            <person name="Holden M.T.G."/>
            <person name="Sebaihia M."/>
            <person name="Baker S."/>
            <person name="Basham D."/>
            <person name="Brooks K."/>
            <person name="Chillingworth T."/>
            <person name="Connerton P."/>
            <person name="Cronin A."/>
            <person name="Davis P."/>
            <person name="Davies R.M."/>
            <person name="Dowd L."/>
            <person name="White N."/>
            <person name="Farrar J."/>
            <person name="Feltwell T."/>
            <person name="Hamlin N."/>
            <person name="Haque A."/>
            <person name="Hien T.T."/>
            <person name="Holroyd S."/>
            <person name="Jagels K."/>
            <person name="Krogh A."/>
            <person name="Larsen T.S."/>
            <person name="Leather S."/>
            <person name="Moule S."/>
            <person name="O'Gaora P."/>
            <person name="Parry C."/>
            <person name="Quail M.A."/>
            <person name="Rutherford K.M."/>
            <person name="Simmonds M."/>
            <person name="Skelton J."/>
            <person name="Stevens K."/>
            <person name="Whitehead S."/>
            <person name="Barrell B.G."/>
        </authorList>
    </citation>
    <scope>NUCLEOTIDE SEQUENCE [LARGE SCALE GENOMIC DNA]</scope>
    <source>
        <strain>CT18</strain>
    </source>
</reference>
<reference key="2">
    <citation type="journal article" date="2003" name="J. Bacteriol.">
        <title>Comparative genomics of Salmonella enterica serovar Typhi strains Ty2 and CT18.</title>
        <authorList>
            <person name="Deng W."/>
            <person name="Liou S.-R."/>
            <person name="Plunkett G. III"/>
            <person name="Mayhew G.F."/>
            <person name="Rose D.J."/>
            <person name="Burland V."/>
            <person name="Kodoyianni V."/>
            <person name="Schwartz D.C."/>
            <person name="Blattner F.R."/>
        </authorList>
    </citation>
    <scope>NUCLEOTIDE SEQUENCE [LARGE SCALE GENOMIC DNA]</scope>
    <source>
        <strain>ATCC 700931 / Ty2</strain>
    </source>
</reference>
<feature type="chain" id="PRO_0000210361" description="Glucans biosynthesis glucosyltransferase H">
    <location>
        <begin position="1"/>
        <end position="847"/>
    </location>
</feature>
<feature type="topological domain" description="Cytoplasmic" evidence="1">
    <location>
        <begin position="1"/>
        <end position="138"/>
    </location>
</feature>
<feature type="transmembrane region" description="Helical" evidence="2">
    <location>
        <begin position="139"/>
        <end position="156"/>
    </location>
</feature>
<feature type="topological domain" description="Periplasmic" evidence="1">
    <location>
        <begin position="157"/>
        <end position="193"/>
    </location>
</feature>
<feature type="transmembrane region" description="Helical" evidence="2">
    <location>
        <begin position="194"/>
        <end position="216"/>
    </location>
</feature>
<feature type="topological domain" description="Cytoplasmic" evidence="1">
    <location>
        <begin position="217"/>
        <end position="511"/>
    </location>
</feature>
<feature type="transmembrane region" description="Helical" evidence="2">
    <location>
        <begin position="512"/>
        <end position="534"/>
    </location>
</feature>
<feature type="topological domain" description="Periplasmic" evidence="1">
    <location>
        <begin position="535"/>
        <end position="567"/>
    </location>
</feature>
<feature type="transmembrane region" description="Helical" evidence="2">
    <location>
        <begin position="568"/>
        <end position="590"/>
    </location>
</feature>
<feature type="topological domain" description="Cytoplasmic" evidence="1">
    <location>
        <begin position="591"/>
        <end position="602"/>
    </location>
</feature>
<feature type="transmembrane region" description="Helical" evidence="2">
    <location>
        <begin position="603"/>
        <end position="625"/>
    </location>
</feature>
<feature type="topological domain" description="Periplasmic" evidence="1">
    <location>
        <begin position="626"/>
        <end position="679"/>
    </location>
</feature>
<feature type="transmembrane region" description="Helical" evidence="2">
    <location>
        <begin position="680"/>
        <end position="702"/>
    </location>
</feature>
<feature type="topological domain" description="Cytoplasmic" evidence="1">
    <location>
        <begin position="703"/>
        <end position="847"/>
    </location>
</feature>
<sequence length="847" mass="96973">MNKTTEYIDALLLSEREKAALPKTDIRAVHQALDAEHRTYSREDDSPQGSVKARLEHAWPDSLAKGQLIKDDEGRDQLQAMPKATRSSMFPDPWRTNPVGRFWDRLRGRDVTPRYVSRLTKEEQASEQKWRTVGTIRRYILLILTLAQTVVATWYMKTILPYQGWALINPMDMVGQDIWVSFMQLLPYMLQTGILILFAVLFCWVSAGFWTALMGFLQLLIGRDKYSISASTVGDEPLNPEHQTALIMPICNEDVSRVFAGLRATWESVKATGNAAHFDVYILSDSYNPDICVAEQKAWMELIAEVQGEGQIFYRRRRRRMKRKSGNIDDFCRRWGNQYSYMVVLDADSVMSGECLSGLVRLMEANPNAGIIQSSPKASGMDTLYARCQQFATRVYGPLFTAGLHFWQLGESHYWGHNAIIRVKPFIEHCALAPLPGEGSFAGSILSHDFVEAALMRRAGWGVWIAYDLPGSYEELPPNLLDELKRDRRWCHGNLMNFRLFLVKGMHPVHRAVFLTGVMSYLSAPLWFMFLALSTALQVVHALTEPQYFLQPRQLFPVWPQWRPELAIALFASTMVLLFLPKLLSIMLIWCKGTKEYGGFWRVTLSLLLEVLFSVLLAPVRMLFHTVFVVSAFLGWEVVWNSPQRDDDSTPWGEAFMRHGSQLLLGLVWAVGMAWLDLRFLFWLAPIVFSLILSPFVSVISSRSTVGLRTKRWKLFLIPEEYSPPQVLVDTDKYLEMNRRRILDDGFMHAVFNPSLNALATAMATARHRASKVLEIARDRHVEQALNETPEKLNRDRRLVLLSDPVTMARLHYRVWNAPERYSSWVNHYQSLVLNPQALQGRTSSAG</sequence>
<keyword id="KW-0997">Cell inner membrane</keyword>
<keyword id="KW-1003">Cell membrane</keyword>
<keyword id="KW-0328">Glycosyltransferase</keyword>
<keyword id="KW-0472">Membrane</keyword>
<keyword id="KW-0808">Transferase</keyword>
<keyword id="KW-0812">Transmembrane</keyword>
<keyword id="KW-1133">Transmembrane helix</keyword>
<accession>Q8Z7L8</accession>
<proteinExistence type="inferred from homology"/>